<sequence>MAIIIGADKAGQELKEVIKDYLKEGKYEVVDVSENEVRDFVDTTLAVVKEVNASDDNLGIVIDAYGVGSFMVATKIKGMVAAEVSDERSAYMTRGHNNARIITLGSEISAPGIAKNIIKGFVEGKYDGGRHQVRVDMLNKMC</sequence>
<evidence type="ECO:0000255" key="1">
    <source>
        <dbReference type="HAMAP-Rule" id="MF_01555"/>
    </source>
</evidence>
<accession>Q99Y12</accession>
<accession>Q48WL9</accession>
<protein>
    <recommendedName>
        <fullName evidence="1">Galactose-6-phosphate isomerase subunit LacA 2</fullName>
        <ecNumber evidence="1">5.3.1.26</ecNumber>
    </recommendedName>
</protein>
<feature type="chain" id="PRO_0000208123" description="Galactose-6-phosphate isomerase subunit LacA 2">
    <location>
        <begin position="1"/>
        <end position="142"/>
    </location>
</feature>
<dbReference type="EC" id="5.3.1.26" evidence="1"/>
<dbReference type="EMBL" id="AE004092">
    <property type="protein sequence ID" value="AAK34626.1"/>
    <property type="molecule type" value="Genomic_DNA"/>
</dbReference>
<dbReference type="EMBL" id="CP000017">
    <property type="protein sequence ID" value="AAZ52256.1"/>
    <property type="molecule type" value="Genomic_DNA"/>
</dbReference>
<dbReference type="RefSeq" id="NP_269905.1">
    <property type="nucleotide sequence ID" value="NC_002737.2"/>
</dbReference>
<dbReference type="SMR" id="Q99Y12"/>
<dbReference type="PaxDb" id="1314-HKU360_01761"/>
<dbReference type="KEGG" id="spy:SPy_1923"/>
<dbReference type="KEGG" id="spz:M5005_Spy1638"/>
<dbReference type="PATRIC" id="fig|160490.10.peg.1671"/>
<dbReference type="HOGENOM" id="CLU_091396_4_2_9"/>
<dbReference type="OMA" id="WNKDVAE"/>
<dbReference type="UniPathway" id="UPA00702">
    <property type="reaction ID" value="UER00714"/>
</dbReference>
<dbReference type="Proteomes" id="UP000000750">
    <property type="component" value="Chromosome"/>
</dbReference>
<dbReference type="GO" id="GO:0050044">
    <property type="term" value="F:galactose-6-phosphate isomerase activity"/>
    <property type="evidence" value="ECO:0007669"/>
    <property type="project" value="UniProtKB-UniRule"/>
</dbReference>
<dbReference type="GO" id="GO:0004751">
    <property type="term" value="F:ribose-5-phosphate isomerase activity"/>
    <property type="evidence" value="ECO:0007669"/>
    <property type="project" value="TreeGrafter"/>
</dbReference>
<dbReference type="GO" id="GO:0019316">
    <property type="term" value="P:D-allose catabolic process"/>
    <property type="evidence" value="ECO:0007669"/>
    <property type="project" value="TreeGrafter"/>
</dbReference>
<dbReference type="GO" id="GO:0019388">
    <property type="term" value="P:galactose catabolic process"/>
    <property type="evidence" value="ECO:0007669"/>
    <property type="project" value="UniProtKB-UniPathway"/>
</dbReference>
<dbReference type="GO" id="GO:0019512">
    <property type="term" value="P:lactose catabolic process via tagatose-6-phosphate"/>
    <property type="evidence" value="ECO:0007669"/>
    <property type="project" value="UniProtKB-UniRule"/>
</dbReference>
<dbReference type="GO" id="GO:0009052">
    <property type="term" value="P:pentose-phosphate shunt, non-oxidative branch"/>
    <property type="evidence" value="ECO:0007669"/>
    <property type="project" value="TreeGrafter"/>
</dbReference>
<dbReference type="Gene3D" id="3.40.1400.10">
    <property type="entry name" value="Sugar-phosphate isomerase, RpiB/LacA/LacB"/>
    <property type="match status" value="1"/>
</dbReference>
<dbReference type="HAMAP" id="MF_01555">
    <property type="entry name" value="LacA"/>
    <property type="match status" value="1"/>
</dbReference>
<dbReference type="InterPro" id="IPR004783">
    <property type="entry name" value="LacA"/>
</dbReference>
<dbReference type="InterPro" id="IPR003500">
    <property type="entry name" value="RpiB_LacA_LacB"/>
</dbReference>
<dbReference type="InterPro" id="IPR036569">
    <property type="entry name" value="RpiB_LacA_LacB_sf"/>
</dbReference>
<dbReference type="NCBIfam" id="TIGR01118">
    <property type="entry name" value="lacA"/>
    <property type="match status" value="1"/>
</dbReference>
<dbReference type="NCBIfam" id="NF006380">
    <property type="entry name" value="PRK08621.1"/>
    <property type="match status" value="1"/>
</dbReference>
<dbReference type="NCBIfam" id="TIGR00689">
    <property type="entry name" value="rpiB_lacA_lacB"/>
    <property type="match status" value="1"/>
</dbReference>
<dbReference type="PANTHER" id="PTHR30345:SF5">
    <property type="entry name" value="GALACTOSE-6-PHOSPHATE ISOMERASE SUBUNIT LACA"/>
    <property type="match status" value="1"/>
</dbReference>
<dbReference type="PANTHER" id="PTHR30345">
    <property type="entry name" value="RIBOSE-5-PHOSPHATE ISOMERASE B"/>
    <property type="match status" value="1"/>
</dbReference>
<dbReference type="Pfam" id="PF02502">
    <property type="entry name" value="LacAB_rpiB"/>
    <property type="match status" value="1"/>
</dbReference>
<dbReference type="PIRSF" id="PIRSF005384">
    <property type="entry name" value="RpiB_LacA_B"/>
    <property type="match status" value="1"/>
</dbReference>
<dbReference type="SUPFAM" id="SSF89623">
    <property type="entry name" value="Ribose/Galactose isomerase RpiB/AlsB"/>
    <property type="match status" value="1"/>
</dbReference>
<proteinExistence type="inferred from homology"/>
<keyword id="KW-0413">Isomerase</keyword>
<keyword id="KW-0423">Lactose metabolism</keyword>
<keyword id="KW-1185">Reference proteome</keyword>
<name>LACA2_STRP1</name>
<organism>
    <name type="scientific">Streptococcus pyogenes serotype M1</name>
    <dbReference type="NCBI Taxonomy" id="301447"/>
    <lineage>
        <taxon>Bacteria</taxon>
        <taxon>Bacillati</taxon>
        <taxon>Bacillota</taxon>
        <taxon>Bacilli</taxon>
        <taxon>Lactobacillales</taxon>
        <taxon>Streptococcaceae</taxon>
        <taxon>Streptococcus</taxon>
    </lineage>
</organism>
<comment type="catalytic activity">
    <reaction evidence="1">
        <text>aldehydo-D-galactose 6-phosphate = keto-D-tagatose 6-phosphate</text>
        <dbReference type="Rhea" id="RHEA:13033"/>
        <dbReference type="ChEBI" id="CHEBI:58255"/>
        <dbReference type="ChEBI" id="CHEBI:134283"/>
        <dbReference type="EC" id="5.3.1.26"/>
    </reaction>
</comment>
<comment type="pathway">
    <text evidence="1">Carbohydrate metabolism; D-galactose 6-phosphate degradation; D-tagatose 6-phosphate from D-galactose 6-phosphate: step 1/1.</text>
</comment>
<comment type="subunit">
    <text evidence="1">Heteromultimeric protein consisting of LacA and LacB.</text>
</comment>
<comment type="similarity">
    <text evidence="1">Belongs to the LacAB/RpiB family.</text>
</comment>
<gene>
    <name evidence="1" type="primary">lacA2</name>
    <name type="synonym">lacA.2</name>
    <name type="ordered locus">SPy_1923</name>
    <name type="ordered locus">M5005_Spy1638</name>
</gene>
<reference key="1">
    <citation type="journal article" date="2001" name="Proc. Natl. Acad. Sci. U.S.A.">
        <title>Complete genome sequence of an M1 strain of Streptococcus pyogenes.</title>
        <authorList>
            <person name="Ferretti J.J."/>
            <person name="McShan W.M."/>
            <person name="Ajdic D.J."/>
            <person name="Savic D.J."/>
            <person name="Savic G."/>
            <person name="Lyon K."/>
            <person name="Primeaux C."/>
            <person name="Sezate S."/>
            <person name="Suvorov A.N."/>
            <person name="Kenton S."/>
            <person name="Lai H.S."/>
            <person name="Lin S.P."/>
            <person name="Qian Y."/>
            <person name="Jia H.G."/>
            <person name="Najar F.Z."/>
            <person name="Ren Q."/>
            <person name="Zhu H."/>
            <person name="Song L."/>
            <person name="White J."/>
            <person name="Yuan X."/>
            <person name="Clifton S.W."/>
            <person name="Roe B.A."/>
            <person name="McLaughlin R.E."/>
        </authorList>
    </citation>
    <scope>NUCLEOTIDE SEQUENCE [LARGE SCALE GENOMIC DNA]</scope>
    <source>
        <strain>ATCC 700294 / SF370 / Serotype M1</strain>
    </source>
</reference>
<reference key="2">
    <citation type="journal article" date="2005" name="J. Infect. Dis.">
        <title>Evolutionary origin and emergence of a highly successful clone of serotype M1 group A Streptococcus involved multiple horizontal gene transfer events.</title>
        <authorList>
            <person name="Sumby P."/>
            <person name="Porcella S.F."/>
            <person name="Madrigal A.G."/>
            <person name="Barbian K.D."/>
            <person name="Virtaneva K."/>
            <person name="Ricklefs S.M."/>
            <person name="Sturdevant D.E."/>
            <person name="Graham M.R."/>
            <person name="Vuopio-Varkila J."/>
            <person name="Hoe N.P."/>
            <person name="Musser J.M."/>
        </authorList>
    </citation>
    <scope>NUCLEOTIDE SEQUENCE [LARGE SCALE GENOMIC DNA]</scope>
    <source>
        <strain>ATCC BAA-947 / MGAS5005 / Serotype M1</strain>
    </source>
</reference>